<sequence>MAVGLLLLAAGVGSRLSSSLPKAFVSVGGLDLIQWCLKNLGQLRTALEVVVTVPKGFVELCERNVLQSLGTLEKIKIVTGGATRQDSVGLGIRYFSARITKLLVHDVARAFTPPEIYLSVIKQLETSKAVIPVIAIVDSIKKVNMQDAYREVARGPGEPFHTKSVLHLDRREFFSAQTPQGFDRALLEAAHERSVASNEQFADDSVMVAQIEKDITLINGHEASFKVTNPCDLQRAEFAASSLLSKSNVSPVNISQPPISALSMPLPLIGVGIDFHKFILDESPLFLACLEWKNYRRLQGHSDGDVVAHACTTALLSAANMGDIGSVFGVDLAATKDASGAYFLESTNRLLATNGFCVLNIAVQVISNTPRLADRRVEAEHAISDCLSGARISLSSVTTDGMGFLGRGEGIGAIAVAQIYHR</sequence>
<evidence type="ECO:0000255" key="1">
    <source>
        <dbReference type="HAMAP-Rule" id="MF_01520"/>
    </source>
</evidence>
<comment type="function">
    <text evidence="1">Bifunctional enzyme that catalyzes the formation of 4-diphosphocytidyl-2-C-methyl-D-erythritol from CTP and 2-C-methyl-D-erythritol 4-phosphate (MEP) (IspD), and catalyzes the conversion of 4-diphosphocytidyl-2-C-methyl-D-erythritol 2-phosphate (CDP-ME2P) to 2-C-methyl-D-erythritol 2,4-cyclodiphosphate (ME-CPP) with a corresponding release of cytidine 5-monophosphate (CMP) (IspF).</text>
</comment>
<comment type="catalytic activity">
    <reaction evidence="1">
        <text>2-C-methyl-D-erythritol 4-phosphate + CTP + H(+) = 4-CDP-2-C-methyl-D-erythritol + diphosphate</text>
        <dbReference type="Rhea" id="RHEA:13429"/>
        <dbReference type="ChEBI" id="CHEBI:15378"/>
        <dbReference type="ChEBI" id="CHEBI:33019"/>
        <dbReference type="ChEBI" id="CHEBI:37563"/>
        <dbReference type="ChEBI" id="CHEBI:57823"/>
        <dbReference type="ChEBI" id="CHEBI:58262"/>
        <dbReference type="EC" id="2.7.7.60"/>
    </reaction>
</comment>
<comment type="catalytic activity">
    <reaction evidence="1">
        <text>4-CDP-2-C-methyl-D-erythritol 2-phosphate = 2-C-methyl-D-erythritol 2,4-cyclic diphosphate + CMP</text>
        <dbReference type="Rhea" id="RHEA:23864"/>
        <dbReference type="ChEBI" id="CHEBI:57919"/>
        <dbReference type="ChEBI" id="CHEBI:58483"/>
        <dbReference type="ChEBI" id="CHEBI:60377"/>
        <dbReference type="EC" id="4.6.1.12"/>
    </reaction>
</comment>
<comment type="cofactor">
    <cofactor evidence="1">
        <name>a divalent metal cation</name>
        <dbReference type="ChEBI" id="CHEBI:60240"/>
    </cofactor>
</comment>
<comment type="pathway">
    <text evidence="1">Isoprenoid biosynthesis; isopentenyl diphosphate biosynthesis via DXP pathway; isopentenyl diphosphate from 1-deoxy-D-xylulose 5-phosphate: step 2/6.</text>
</comment>
<comment type="pathway">
    <text evidence="1">Isoprenoid biosynthesis; isopentenyl diphosphate biosynthesis via DXP pathway; isopentenyl diphosphate from 1-deoxy-D-xylulose 5-phosphate: step 4/6.</text>
</comment>
<comment type="similarity">
    <text evidence="1">In the N-terminal section; belongs to the IspD/TarI cytidylyltransferase family. IspD subfamily.</text>
</comment>
<comment type="similarity">
    <text evidence="1">In the C-terminal section; belongs to the IspF family.</text>
</comment>
<organism>
    <name type="scientific">Tropheryma whipplei (strain TW08/27)</name>
    <name type="common">Whipple's bacillus</name>
    <dbReference type="NCBI Taxonomy" id="218496"/>
    <lineage>
        <taxon>Bacteria</taxon>
        <taxon>Bacillati</taxon>
        <taxon>Actinomycetota</taxon>
        <taxon>Actinomycetes</taxon>
        <taxon>Micrococcales</taxon>
        <taxon>Tropherymataceae</taxon>
        <taxon>Tropheryma</taxon>
    </lineage>
</organism>
<keyword id="KW-0414">Isoprene biosynthesis</keyword>
<keyword id="KW-0456">Lyase</keyword>
<keyword id="KW-0479">Metal-binding</keyword>
<keyword id="KW-0511">Multifunctional enzyme</keyword>
<keyword id="KW-0548">Nucleotidyltransferase</keyword>
<keyword id="KW-0808">Transferase</keyword>
<name>ISPDF_TROW8</name>
<proteinExistence type="inferred from homology"/>
<reference key="1">
    <citation type="journal article" date="2003" name="Lancet">
        <title>Sequencing and analysis of the genome of the Whipple's disease bacterium Tropheryma whipplei.</title>
        <authorList>
            <person name="Bentley S.D."/>
            <person name="Maiwald M."/>
            <person name="Murphy L.D."/>
            <person name="Pallen M.J."/>
            <person name="Yeats C.A."/>
            <person name="Dover L.G."/>
            <person name="Norbertczak H.T."/>
            <person name="Besra G.S."/>
            <person name="Quail M.A."/>
            <person name="Harris D.E."/>
            <person name="von Herbay A."/>
            <person name="Goble A."/>
            <person name="Rutter S."/>
            <person name="Squares R."/>
            <person name="Squares S."/>
            <person name="Barrell B.G."/>
            <person name="Parkhill J."/>
            <person name="Relman D.A."/>
        </authorList>
    </citation>
    <scope>NUCLEOTIDE SEQUENCE [LARGE SCALE GENOMIC DNA]</scope>
    <source>
        <strain>TW08/27</strain>
    </source>
</reference>
<accession>Q83NK3</accession>
<dbReference type="EC" id="2.7.7.60" evidence="1"/>
<dbReference type="EC" id="4.6.1.12" evidence="1"/>
<dbReference type="EMBL" id="BX251411">
    <property type="protein sequence ID" value="CAD67092.1"/>
    <property type="molecule type" value="Genomic_DNA"/>
</dbReference>
<dbReference type="RefSeq" id="WP_011096372.1">
    <property type="nucleotide sequence ID" value="NC_004551.1"/>
</dbReference>
<dbReference type="SMR" id="Q83NK3"/>
<dbReference type="GeneID" id="67388199"/>
<dbReference type="KEGG" id="tws:TW422"/>
<dbReference type="HOGENOM" id="CLU_042800_2_5_11"/>
<dbReference type="UniPathway" id="UPA00056">
    <property type="reaction ID" value="UER00093"/>
</dbReference>
<dbReference type="UniPathway" id="UPA00056">
    <property type="reaction ID" value="UER00095"/>
</dbReference>
<dbReference type="GO" id="GO:0008685">
    <property type="term" value="F:2-C-methyl-D-erythritol 2,4-cyclodiphosphate synthase activity"/>
    <property type="evidence" value="ECO:0007669"/>
    <property type="project" value="UniProtKB-UniRule"/>
</dbReference>
<dbReference type="GO" id="GO:0050518">
    <property type="term" value="F:2-C-methyl-D-erythritol 4-phosphate cytidylyltransferase activity"/>
    <property type="evidence" value="ECO:0007669"/>
    <property type="project" value="UniProtKB-UniRule"/>
</dbReference>
<dbReference type="GO" id="GO:0046872">
    <property type="term" value="F:metal ion binding"/>
    <property type="evidence" value="ECO:0007669"/>
    <property type="project" value="UniProtKB-KW"/>
</dbReference>
<dbReference type="GO" id="GO:0019288">
    <property type="term" value="P:isopentenyl diphosphate biosynthetic process, methylerythritol 4-phosphate pathway"/>
    <property type="evidence" value="ECO:0007669"/>
    <property type="project" value="UniProtKB-UniRule"/>
</dbReference>
<dbReference type="GO" id="GO:0016114">
    <property type="term" value="P:terpenoid biosynthetic process"/>
    <property type="evidence" value="ECO:0007669"/>
    <property type="project" value="InterPro"/>
</dbReference>
<dbReference type="CDD" id="cd02516">
    <property type="entry name" value="CDP-ME_synthetase"/>
    <property type="match status" value="1"/>
</dbReference>
<dbReference type="CDD" id="cd00554">
    <property type="entry name" value="MECDP_synthase"/>
    <property type="match status" value="1"/>
</dbReference>
<dbReference type="Gene3D" id="3.30.1330.50">
    <property type="entry name" value="2-C-methyl-D-erythritol 2,4-cyclodiphosphate synthase"/>
    <property type="match status" value="1"/>
</dbReference>
<dbReference type="Gene3D" id="3.90.550.10">
    <property type="entry name" value="Spore Coat Polysaccharide Biosynthesis Protein SpsA, Chain A"/>
    <property type="match status" value="1"/>
</dbReference>
<dbReference type="HAMAP" id="MF_01520">
    <property type="entry name" value="IspDF"/>
    <property type="match status" value="1"/>
</dbReference>
<dbReference type="HAMAP" id="MF_00107">
    <property type="entry name" value="IspF"/>
    <property type="match status" value="1"/>
</dbReference>
<dbReference type="InterPro" id="IPR026596">
    <property type="entry name" value="IspD/F"/>
</dbReference>
<dbReference type="InterPro" id="IPR034683">
    <property type="entry name" value="IspD/TarI"/>
</dbReference>
<dbReference type="InterPro" id="IPR050088">
    <property type="entry name" value="IspD/TarI_cytidylyltransf_bact"/>
</dbReference>
<dbReference type="InterPro" id="IPR003526">
    <property type="entry name" value="MECDP_synthase"/>
</dbReference>
<dbReference type="InterPro" id="IPR020555">
    <property type="entry name" value="MECDP_synthase_CS"/>
</dbReference>
<dbReference type="InterPro" id="IPR036571">
    <property type="entry name" value="MECDP_synthase_sf"/>
</dbReference>
<dbReference type="InterPro" id="IPR029044">
    <property type="entry name" value="Nucleotide-diphossugar_trans"/>
</dbReference>
<dbReference type="PANTHER" id="PTHR32125">
    <property type="entry name" value="2-C-METHYL-D-ERYTHRITOL 4-PHOSPHATE CYTIDYLYLTRANSFERASE, CHLOROPLASTIC"/>
    <property type="match status" value="1"/>
</dbReference>
<dbReference type="PANTHER" id="PTHR32125:SF4">
    <property type="entry name" value="2-C-METHYL-D-ERYTHRITOL 4-PHOSPHATE CYTIDYLYLTRANSFERASE, CHLOROPLASTIC"/>
    <property type="match status" value="1"/>
</dbReference>
<dbReference type="Pfam" id="PF01128">
    <property type="entry name" value="IspD"/>
    <property type="match status" value="1"/>
</dbReference>
<dbReference type="Pfam" id="PF02542">
    <property type="entry name" value="YgbB"/>
    <property type="match status" value="1"/>
</dbReference>
<dbReference type="SUPFAM" id="SSF69765">
    <property type="entry name" value="IpsF-like"/>
    <property type="match status" value="1"/>
</dbReference>
<dbReference type="SUPFAM" id="SSF53448">
    <property type="entry name" value="Nucleotide-diphospho-sugar transferases"/>
    <property type="match status" value="1"/>
</dbReference>
<dbReference type="PROSITE" id="PS01350">
    <property type="entry name" value="ISPF"/>
    <property type="match status" value="1"/>
</dbReference>
<gene>
    <name evidence="1" type="primary">ispDF</name>
    <name type="ordered locus">TW422</name>
</gene>
<feature type="chain" id="PRO_0000075679" description="Bifunctional enzyme IspD/IspF">
    <location>
        <begin position="1"/>
        <end position="422"/>
    </location>
</feature>
<feature type="region of interest" description="2-C-methyl-D-erythritol 4-phosphate cytidylyltransferase" evidence="1">
    <location>
        <begin position="1"/>
        <end position="267"/>
    </location>
</feature>
<feature type="region of interest" description="2-C-methyl-D-erythritol 2,4-cyclodiphosphate synthase" evidence="1">
    <location>
        <begin position="268"/>
        <end position="422"/>
    </location>
</feature>
<feature type="binding site" evidence="1">
    <location>
        <begin position="274"/>
        <end position="276"/>
    </location>
    <ligand>
        <name>4-CDP-2-C-methyl-D-erythritol 2-phosphate</name>
        <dbReference type="ChEBI" id="CHEBI:57919"/>
    </ligand>
</feature>
<feature type="binding site" evidence="1">
    <location>
        <position position="274"/>
    </location>
    <ligand>
        <name>a divalent metal cation</name>
        <dbReference type="ChEBI" id="CHEBI:60240"/>
    </ligand>
</feature>
<feature type="binding site" evidence="1">
    <location>
        <position position="276"/>
    </location>
    <ligand>
        <name>a divalent metal cation</name>
        <dbReference type="ChEBI" id="CHEBI:60240"/>
    </ligand>
</feature>
<feature type="binding site" evidence="1">
    <location>
        <begin position="301"/>
        <end position="302"/>
    </location>
    <ligand>
        <name>4-CDP-2-C-methyl-D-erythritol 2-phosphate</name>
        <dbReference type="ChEBI" id="CHEBI:57919"/>
    </ligand>
</feature>
<feature type="binding site" evidence="1">
    <location>
        <position position="309"/>
    </location>
    <ligand>
        <name>a divalent metal cation</name>
        <dbReference type="ChEBI" id="CHEBI:60240"/>
    </ligand>
</feature>
<feature type="binding site" evidence="1">
    <location>
        <begin position="323"/>
        <end position="325"/>
    </location>
    <ligand>
        <name>4-CDP-2-C-methyl-D-erythritol 2-phosphate</name>
        <dbReference type="ChEBI" id="CHEBI:57919"/>
    </ligand>
</feature>
<feature type="binding site" evidence="1">
    <location>
        <position position="404"/>
    </location>
    <ligand>
        <name>4-CDP-2-C-methyl-D-erythritol 2-phosphate</name>
        <dbReference type="ChEBI" id="CHEBI:57919"/>
    </ligand>
</feature>
<feature type="binding site" evidence="1">
    <location>
        <position position="407"/>
    </location>
    <ligand>
        <name>4-CDP-2-C-methyl-D-erythritol 2-phosphate</name>
        <dbReference type="ChEBI" id="CHEBI:57919"/>
    </ligand>
</feature>
<feature type="site" description="Transition state stabilizer" evidence="1">
    <location>
        <position position="15"/>
    </location>
</feature>
<feature type="site" description="Transition state stabilizer" evidence="1">
    <location>
        <position position="22"/>
    </location>
</feature>
<feature type="site" description="Positions MEP for the nucleophilic attack" evidence="1">
    <location>
        <position position="170"/>
    </location>
</feature>
<feature type="site" description="Positions MEP for the nucleophilic attack" evidence="1">
    <location>
        <position position="226"/>
    </location>
</feature>
<feature type="site" description="Transition state stabilizer" evidence="1">
    <location>
        <position position="301"/>
    </location>
</feature>
<feature type="site" description="Transition state stabilizer" evidence="1">
    <location>
        <position position="398"/>
    </location>
</feature>
<protein>
    <recommendedName>
        <fullName evidence="1">Bifunctional enzyme IspD/IspF</fullName>
    </recommendedName>
    <domain>
        <recommendedName>
            <fullName evidence="1">2-C-methyl-D-erythritol 4-phosphate cytidylyltransferase</fullName>
            <ecNumber evidence="1">2.7.7.60</ecNumber>
        </recommendedName>
        <alternativeName>
            <fullName evidence="1">4-diphosphocytidyl-2C-methyl-D-erythritol synthase</fullName>
        </alternativeName>
        <alternativeName>
            <fullName evidence="1">MEP cytidylyltransferase</fullName>
            <shortName evidence="1">MCT</shortName>
        </alternativeName>
    </domain>
    <domain>
        <recommendedName>
            <fullName evidence="1">2-C-methyl-D-erythritol 2,4-cyclodiphosphate synthase</fullName>
            <shortName evidence="1">MECDP-synthase</shortName>
            <shortName evidence="1">MECPP-synthase</shortName>
            <shortName evidence="1">MECPS</shortName>
            <ecNumber evidence="1">4.6.1.12</ecNumber>
        </recommendedName>
    </domain>
</protein>